<dbReference type="EC" id="2.3.3.9" evidence="1"/>
<dbReference type="EMBL" id="CP000872">
    <property type="protein sequence ID" value="ABX62699.1"/>
    <property type="molecule type" value="Genomic_DNA"/>
</dbReference>
<dbReference type="RefSeq" id="WP_004690441.1">
    <property type="nucleotide sequence ID" value="NC_010103.1"/>
</dbReference>
<dbReference type="SMR" id="A9M752"/>
<dbReference type="GeneID" id="55591276"/>
<dbReference type="KEGG" id="bcs:BCAN_A1689"/>
<dbReference type="HOGENOM" id="CLU_028446_1_0_5"/>
<dbReference type="PhylomeDB" id="A9M752"/>
<dbReference type="UniPathway" id="UPA00703">
    <property type="reaction ID" value="UER00720"/>
</dbReference>
<dbReference type="Proteomes" id="UP000001385">
    <property type="component" value="Chromosome I"/>
</dbReference>
<dbReference type="GO" id="GO:0005829">
    <property type="term" value="C:cytosol"/>
    <property type="evidence" value="ECO:0007669"/>
    <property type="project" value="TreeGrafter"/>
</dbReference>
<dbReference type="GO" id="GO:0000287">
    <property type="term" value="F:magnesium ion binding"/>
    <property type="evidence" value="ECO:0007669"/>
    <property type="project" value="TreeGrafter"/>
</dbReference>
<dbReference type="GO" id="GO:0004474">
    <property type="term" value="F:malate synthase activity"/>
    <property type="evidence" value="ECO:0007669"/>
    <property type="project" value="UniProtKB-UniRule"/>
</dbReference>
<dbReference type="GO" id="GO:0009436">
    <property type="term" value="P:glyoxylate catabolic process"/>
    <property type="evidence" value="ECO:0007669"/>
    <property type="project" value="TreeGrafter"/>
</dbReference>
<dbReference type="GO" id="GO:0006097">
    <property type="term" value="P:glyoxylate cycle"/>
    <property type="evidence" value="ECO:0007669"/>
    <property type="project" value="UniProtKB-UniRule"/>
</dbReference>
<dbReference type="GO" id="GO:0006099">
    <property type="term" value="P:tricarboxylic acid cycle"/>
    <property type="evidence" value="ECO:0007669"/>
    <property type="project" value="UniProtKB-KW"/>
</dbReference>
<dbReference type="CDD" id="cd00728">
    <property type="entry name" value="malate_synt_G"/>
    <property type="match status" value="1"/>
</dbReference>
<dbReference type="FunFam" id="3.20.20.360:FF:000002">
    <property type="entry name" value="Malate synthase G"/>
    <property type="match status" value="1"/>
</dbReference>
<dbReference type="Gene3D" id="3.20.20.360">
    <property type="entry name" value="Malate synthase, domain 3"/>
    <property type="match status" value="2"/>
</dbReference>
<dbReference type="Gene3D" id="1.20.1220.12">
    <property type="entry name" value="Malate synthase, domain III"/>
    <property type="match status" value="1"/>
</dbReference>
<dbReference type="HAMAP" id="MF_00641">
    <property type="entry name" value="Malate_synth_G"/>
    <property type="match status" value="1"/>
</dbReference>
<dbReference type="InterPro" id="IPR044856">
    <property type="entry name" value="Malate_synth_C_sf"/>
</dbReference>
<dbReference type="InterPro" id="IPR011076">
    <property type="entry name" value="Malate_synth_sf"/>
</dbReference>
<dbReference type="InterPro" id="IPR001465">
    <property type="entry name" value="Malate_synthase_TIM"/>
</dbReference>
<dbReference type="InterPro" id="IPR006253">
    <property type="entry name" value="Malate_synthG"/>
</dbReference>
<dbReference type="InterPro" id="IPR048355">
    <property type="entry name" value="MS_C"/>
</dbReference>
<dbReference type="InterPro" id="IPR048356">
    <property type="entry name" value="MS_N"/>
</dbReference>
<dbReference type="InterPro" id="IPR046363">
    <property type="entry name" value="MS_N_TIM-barrel_dom"/>
</dbReference>
<dbReference type="InterPro" id="IPR048357">
    <property type="entry name" value="MSG_insertion"/>
</dbReference>
<dbReference type="NCBIfam" id="TIGR01345">
    <property type="entry name" value="malate_syn_G"/>
    <property type="match status" value="1"/>
</dbReference>
<dbReference type="NCBIfam" id="NF002825">
    <property type="entry name" value="PRK02999.1"/>
    <property type="match status" value="1"/>
</dbReference>
<dbReference type="PANTHER" id="PTHR42739">
    <property type="entry name" value="MALATE SYNTHASE G"/>
    <property type="match status" value="1"/>
</dbReference>
<dbReference type="PANTHER" id="PTHR42739:SF1">
    <property type="entry name" value="MALATE SYNTHASE G"/>
    <property type="match status" value="1"/>
</dbReference>
<dbReference type="Pfam" id="PF20659">
    <property type="entry name" value="MS_C"/>
    <property type="match status" value="1"/>
</dbReference>
<dbReference type="Pfam" id="PF20656">
    <property type="entry name" value="MS_N"/>
    <property type="match status" value="1"/>
</dbReference>
<dbReference type="Pfam" id="PF01274">
    <property type="entry name" value="MS_TIM-barrel"/>
    <property type="match status" value="1"/>
</dbReference>
<dbReference type="Pfam" id="PF20658">
    <property type="entry name" value="MSG_insertion"/>
    <property type="match status" value="1"/>
</dbReference>
<dbReference type="SUPFAM" id="SSF51645">
    <property type="entry name" value="Malate synthase G"/>
    <property type="match status" value="1"/>
</dbReference>
<organism>
    <name type="scientific">Brucella canis (strain ATCC 23365 / NCTC 10854 / RM-666)</name>
    <dbReference type="NCBI Taxonomy" id="483179"/>
    <lineage>
        <taxon>Bacteria</taxon>
        <taxon>Pseudomonadati</taxon>
        <taxon>Pseudomonadota</taxon>
        <taxon>Alphaproteobacteria</taxon>
        <taxon>Hyphomicrobiales</taxon>
        <taxon>Brucellaceae</taxon>
        <taxon>Brucella/Ochrobactrum group</taxon>
        <taxon>Brucella</taxon>
    </lineage>
</organism>
<name>MASZ_BRUC2</name>
<proteinExistence type="inferred from homology"/>
<gene>
    <name evidence="1" type="primary">glcB</name>
    <name type="ordered locus">BCAN_A1689</name>
</gene>
<accession>A9M752</accession>
<evidence type="ECO:0000255" key="1">
    <source>
        <dbReference type="HAMAP-Rule" id="MF_00641"/>
    </source>
</evidence>
<protein>
    <recommendedName>
        <fullName evidence="1">Malate synthase G</fullName>
        <ecNumber evidence="1">2.3.3.9</ecNumber>
    </recommendedName>
</protein>
<keyword id="KW-0963">Cytoplasm</keyword>
<keyword id="KW-0329">Glyoxylate bypass</keyword>
<keyword id="KW-0460">Magnesium</keyword>
<keyword id="KW-0479">Metal-binding</keyword>
<keyword id="KW-0558">Oxidation</keyword>
<keyword id="KW-1185">Reference proteome</keyword>
<keyword id="KW-0808">Transferase</keyword>
<keyword id="KW-0816">Tricarboxylic acid cycle</keyword>
<reference key="1">
    <citation type="submission" date="2007-10" db="EMBL/GenBank/DDBJ databases">
        <title>Brucella canis ATCC 23365 whole genome shotgun sequencing project.</title>
        <authorList>
            <person name="Setubal J.C."/>
            <person name="Bowns C."/>
            <person name="Boyle S."/>
            <person name="Crasta O.R."/>
            <person name="Czar M.J."/>
            <person name="Dharmanolla C."/>
            <person name="Gillespie J.J."/>
            <person name="Kenyon R.W."/>
            <person name="Lu J."/>
            <person name="Mane S."/>
            <person name="Mohapatra S."/>
            <person name="Nagrani S."/>
            <person name="Purkayastha A."/>
            <person name="Rajasimha H.K."/>
            <person name="Shallom J.M."/>
            <person name="Shallom S."/>
            <person name="Shukla M."/>
            <person name="Snyder E.E."/>
            <person name="Sobral B.W."/>
            <person name="Wattam A.R."/>
            <person name="Will R."/>
            <person name="Williams K."/>
            <person name="Yoo H."/>
            <person name="Bruce D."/>
            <person name="Detter C."/>
            <person name="Munk C."/>
            <person name="Brettin T.S."/>
        </authorList>
    </citation>
    <scope>NUCLEOTIDE SEQUENCE [LARGE SCALE GENOMIC DNA]</scope>
    <source>
        <strain>ATCC 23365 / NCTC 10854 / RM-666</strain>
    </source>
</reference>
<comment type="function">
    <text evidence="1">Involved in the glycolate utilization. Catalyzes the condensation and subsequent hydrolysis of acetyl-coenzyme A (acetyl-CoA) and glyoxylate to form malate and CoA.</text>
</comment>
<comment type="catalytic activity">
    <reaction evidence="1">
        <text>glyoxylate + acetyl-CoA + H2O = (S)-malate + CoA + H(+)</text>
        <dbReference type="Rhea" id="RHEA:18181"/>
        <dbReference type="ChEBI" id="CHEBI:15377"/>
        <dbReference type="ChEBI" id="CHEBI:15378"/>
        <dbReference type="ChEBI" id="CHEBI:15589"/>
        <dbReference type="ChEBI" id="CHEBI:36655"/>
        <dbReference type="ChEBI" id="CHEBI:57287"/>
        <dbReference type="ChEBI" id="CHEBI:57288"/>
        <dbReference type="EC" id="2.3.3.9"/>
    </reaction>
</comment>
<comment type="cofactor">
    <cofactor evidence="1">
        <name>Mg(2+)</name>
        <dbReference type="ChEBI" id="CHEBI:18420"/>
    </cofactor>
</comment>
<comment type="pathway">
    <text evidence="1">Carbohydrate metabolism; glyoxylate cycle; (S)-malate from isocitrate: step 2/2.</text>
</comment>
<comment type="subunit">
    <text evidence="1">Monomer.</text>
</comment>
<comment type="subcellular location">
    <subcellularLocation>
        <location evidence="1">Cytoplasm</location>
    </subcellularLocation>
</comment>
<comment type="similarity">
    <text evidence="1">Belongs to the malate synthase family. GlcB subfamily.</text>
</comment>
<feature type="chain" id="PRO_1000082698" description="Malate synthase G">
    <location>
        <begin position="1"/>
        <end position="728"/>
    </location>
</feature>
<feature type="active site" description="Proton acceptor" evidence="1">
    <location>
        <position position="345"/>
    </location>
</feature>
<feature type="active site" description="Proton donor" evidence="1">
    <location>
        <position position="636"/>
    </location>
</feature>
<feature type="binding site" evidence="1">
    <location>
        <position position="123"/>
    </location>
    <ligand>
        <name>acetyl-CoA</name>
        <dbReference type="ChEBI" id="CHEBI:57288"/>
    </ligand>
</feature>
<feature type="binding site" evidence="1">
    <location>
        <begin position="130"/>
        <end position="131"/>
    </location>
    <ligand>
        <name>acetyl-CoA</name>
        <dbReference type="ChEBI" id="CHEBI:57288"/>
    </ligand>
</feature>
<feature type="binding site" evidence="1">
    <location>
        <position position="281"/>
    </location>
    <ligand>
        <name>acetyl-CoA</name>
        <dbReference type="ChEBI" id="CHEBI:57288"/>
    </ligand>
</feature>
<feature type="binding site" evidence="1">
    <location>
        <position position="318"/>
    </location>
    <ligand>
        <name>acetyl-CoA</name>
        <dbReference type="ChEBI" id="CHEBI:57288"/>
    </ligand>
</feature>
<feature type="binding site" evidence="1">
    <location>
        <position position="345"/>
    </location>
    <ligand>
        <name>glyoxylate</name>
        <dbReference type="ChEBI" id="CHEBI:36655"/>
    </ligand>
</feature>
<feature type="binding site" evidence="1">
    <location>
        <position position="437"/>
    </location>
    <ligand>
        <name>glyoxylate</name>
        <dbReference type="ChEBI" id="CHEBI:36655"/>
    </ligand>
</feature>
<feature type="binding site" evidence="1">
    <location>
        <position position="437"/>
    </location>
    <ligand>
        <name>Mg(2+)</name>
        <dbReference type="ChEBI" id="CHEBI:18420"/>
    </ligand>
</feature>
<feature type="binding site" evidence="1">
    <location>
        <begin position="462"/>
        <end position="465"/>
    </location>
    <ligand>
        <name>glyoxylate</name>
        <dbReference type="ChEBI" id="CHEBI:36655"/>
    </ligand>
</feature>
<feature type="binding site" evidence="1">
    <location>
        <position position="465"/>
    </location>
    <ligand>
        <name>Mg(2+)</name>
        <dbReference type="ChEBI" id="CHEBI:18420"/>
    </ligand>
</feature>
<feature type="binding site" evidence="1">
    <location>
        <position position="546"/>
    </location>
    <ligand>
        <name>acetyl-CoA</name>
        <dbReference type="ChEBI" id="CHEBI:57288"/>
    </ligand>
</feature>
<feature type="modified residue" description="Cysteine sulfenic acid (-SOH)" evidence="1">
    <location>
        <position position="622"/>
    </location>
</feature>
<sequence length="728" mass="80085">MGSAEKRNYVEIEGLAVAPELVEFLAKEAAPGTGVEPEKFWKGFAAIIRDLAPKNRALLAKRDELQARIDAWYKENRDKGYSQADYQQFLKDIGYLLPEGGAFSVSTTNVDPEITHIAGPQLVVPVMNARYALNAANARWGSLYDALYGTDAISEADGAEKGKGYNPKRGEKVIAWAKNFLDESAPLSTGKWADVAGLAVNDGKLEIRLTDGSATTLKDESQFKGYNGDAASPTNVLLAKHNMHVDIVINADHPIGKTDPAHIADVVLESAISTIQDCEDSIAAVDAEDKVAVYRNWLRLMNGKLEDTFEKNGKQMTRRLNGDRTYTAPDGSTLTLKGRSLMLVRNVGHLMTNPAILDAEGNEVPEGIMDAAFTSLIALHDIGPNGRHMNSREGSVYIVKPKMHGPEEVAFANEIFTRTEEMLGMKPNTLKIGIMDEERRTTVNLKEAIRAAKDRVVFINTGFLDRTGDEIHTSMEAGPMIRKGDMKQAAWIGAYEQWNVDIGLECGLSGHAQIGKGMWAMPDMMAAMLEQKIAHPKAGANTAWVPSPTAATLHATHYHKIDVAAVQEKLKSRPRAKLDDILSVPVAVRPNWTPDDIQHEIDNNAQGILGYVVRWIDQGVGCSKVPDINNVGLMEDRATLRISAQHIANWLYHGVVSEAQVMETMKRMAAIVDKQNEGDPLYRPMAADFDKSIAFQAACDLVFKGREQPNGYTEPVLHRRRLELKQAS</sequence>